<reference key="1">
    <citation type="journal article" date="2003" name="J. Bacteriol.">
        <title>Comparative analyses of the complete genome sequences of Pierce's disease and citrus variegated chlorosis strains of Xylella fastidiosa.</title>
        <authorList>
            <person name="Van Sluys M.A."/>
            <person name="de Oliveira M.C."/>
            <person name="Monteiro-Vitorello C.B."/>
            <person name="Miyaki C.Y."/>
            <person name="Furlan L.R."/>
            <person name="Camargo L.E.A."/>
            <person name="da Silva A.C.R."/>
            <person name="Moon D.H."/>
            <person name="Takita M.A."/>
            <person name="Lemos E.G.M."/>
            <person name="Machado M.A."/>
            <person name="Ferro M.I.T."/>
            <person name="da Silva F.R."/>
            <person name="Goldman M.H.S."/>
            <person name="Goldman G.H."/>
            <person name="Lemos M.V.F."/>
            <person name="El-Dorry H."/>
            <person name="Tsai S.M."/>
            <person name="Carrer H."/>
            <person name="Carraro D.M."/>
            <person name="de Oliveira R.C."/>
            <person name="Nunes L.R."/>
            <person name="Siqueira W.J."/>
            <person name="Coutinho L.L."/>
            <person name="Kimura E.T."/>
            <person name="Ferro E.S."/>
            <person name="Harakava R."/>
            <person name="Kuramae E.E."/>
            <person name="Marino C.L."/>
            <person name="Giglioti E."/>
            <person name="Abreu I.L."/>
            <person name="Alves L.M.C."/>
            <person name="do Amaral A.M."/>
            <person name="Baia G.S."/>
            <person name="Blanco S.R."/>
            <person name="Brito M.S."/>
            <person name="Cannavan F.S."/>
            <person name="Celestino A.V."/>
            <person name="da Cunha A.F."/>
            <person name="Fenille R.C."/>
            <person name="Ferro J.A."/>
            <person name="Formighieri E.F."/>
            <person name="Kishi L.T."/>
            <person name="Leoni S.G."/>
            <person name="Oliveira A.R."/>
            <person name="Rosa V.E. Jr."/>
            <person name="Sassaki F.T."/>
            <person name="Sena J.A.D."/>
            <person name="de Souza A.A."/>
            <person name="Truffi D."/>
            <person name="Tsukumo F."/>
            <person name="Yanai G.M."/>
            <person name="Zaros L.G."/>
            <person name="Civerolo E.L."/>
            <person name="Simpson A.J.G."/>
            <person name="Almeida N.F. Jr."/>
            <person name="Setubal J.C."/>
            <person name="Kitajima J.P."/>
        </authorList>
    </citation>
    <scope>NUCLEOTIDE SEQUENCE [LARGE SCALE GENOMIC DNA]</scope>
    <source>
        <strain>Temecula1 / ATCC 700964</strain>
    </source>
</reference>
<evidence type="ECO:0000250" key="1"/>
<evidence type="ECO:0000255" key="2">
    <source>
        <dbReference type="PROSITE-ProRule" id="PRU01023"/>
    </source>
</evidence>
<evidence type="ECO:0000305" key="3"/>
<accession>Q87AR1</accession>
<comment type="function">
    <text evidence="1">Specifically methylates the cytosine at position 967 (m5C967) of 16S rRNA.</text>
</comment>
<comment type="catalytic activity">
    <reaction>
        <text>cytidine(967) in 16S rRNA + S-adenosyl-L-methionine = 5-methylcytidine(967) in 16S rRNA + S-adenosyl-L-homocysteine + H(+)</text>
        <dbReference type="Rhea" id="RHEA:42748"/>
        <dbReference type="Rhea" id="RHEA-COMP:10219"/>
        <dbReference type="Rhea" id="RHEA-COMP:10220"/>
        <dbReference type="ChEBI" id="CHEBI:15378"/>
        <dbReference type="ChEBI" id="CHEBI:57856"/>
        <dbReference type="ChEBI" id="CHEBI:59789"/>
        <dbReference type="ChEBI" id="CHEBI:74483"/>
        <dbReference type="ChEBI" id="CHEBI:82748"/>
        <dbReference type="EC" id="2.1.1.176"/>
    </reaction>
</comment>
<comment type="subcellular location">
    <subcellularLocation>
        <location evidence="3">Cytoplasm</location>
    </subcellularLocation>
</comment>
<comment type="similarity">
    <text evidence="2">Belongs to the class I-like SAM-binding methyltransferase superfamily. RsmB/NOP family.</text>
</comment>
<dbReference type="EC" id="2.1.1.176"/>
<dbReference type="EMBL" id="AE009442">
    <property type="protein sequence ID" value="AAO29595.1"/>
    <property type="molecule type" value="Genomic_DNA"/>
</dbReference>
<dbReference type="RefSeq" id="WP_004089643.1">
    <property type="nucleotide sequence ID" value="NC_004556.1"/>
</dbReference>
<dbReference type="SMR" id="Q87AR1"/>
<dbReference type="GeneID" id="93905608"/>
<dbReference type="KEGG" id="xft:PD_1761"/>
<dbReference type="HOGENOM" id="CLU_005316_0_4_6"/>
<dbReference type="Proteomes" id="UP000002516">
    <property type="component" value="Chromosome"/>
</dbReference>
<dbReference type="GO" id="GO:0005829">
    <property type="term" value="C:cytosol"/>
    <property type="evidence" value="ECO:0007669"/>
    <property type="project" value="TreeGrafter"/>
</dbReference>
<dbReference type="GO" id="GO:0003723">
    <property type="term" value="F:RNA binding"/>
    <property type="evidence" value="ECO:0007669"/>
    <property type="project" value="UniProtKB-KW"/>
</dbReference>
<dbReference type="GO" id="GO:0009383">
    <property type="term" value="F:rRNA (cytosine-C5-)-methyltransferase activity"/>
    <property type="evidence" value="ECO:0007669"/>
    <property type="project" value="TreeGrafter"/>
</dbReference>
<dbReference type="GO" id="GO:0006355">
    <property type="term" value="P:regulation of DNA-templated transcription"/>
    <property type="evidence" value="ECO:0007669"/>
    <property type="project" value="InterPro"/>
</dbReference>
<dbReference type="GO" id="GO:0070475">
    <property type="term" value="P:rRNA base methylation"/>
    <property type="evidence" value="ECO:0007669"/>
    <property type="project" value="TreeGrafter"/>
</dbReference>
<dbReference type="CDD" id="cd02440">
    <property type="entry name" value="AdoMet_MTases"/>
    <property type="match status" value="1"/>
</dbReference>
<dbReference type="FunFam" id="3.40.50.150:FF:000022">
    <property type="entry name" value="Ribosomal RNA small subunit methyltransferase B"/>
    <property type="match status" value="1"/>
</dbReference>
<dbReference type="Gene3D" id="1.10.940.10">
    <property type="entry name" value="NusB-like"/>
    <property type="match status" value="1"/>
</dbReference>
<dbReference type="Gene3D" id="3.30.70.1170">
    <property type="entry name" value="Sun protein, domain 3"/>
    <property type="match status" value="1"/>
</dbReference>
<dbReference type="Gene3D" id="3.40.50.150">
    <property type="entry name" value="Vaccinia Virus protein VP39"/>
    <property type="match status" value="1"/>
</dbReference>
<dbReference type="InterPro" id="IPR049560">
    <property type="entry name" value="MeTrfase_RsmB-F_NOP2_cat"/>
</dbReference>
<dbReference type="InterPro" id="IPR001678">
    <property type="entry name" value="MeTrfase_RsmB-F_NOP2_dom"/>
</dbReference>
<dbReference type="InterPro" id="IPR035926">
    <property type="entry name" value="NusB-like_sf"/>
</dbReference>
<dbReference type="InterPro" id="IPR006027">
    <property type="entry name" value="NusB_RsmB_TIM44"/>
</dbReference>
<dbReference type="InterPro" id="IPR023267">
    <property type="entry name" value="RCMT"/>
</dbReference>
<dbReference type="InterPro" id="IPR004573">
    <property type="entry name" value="rRNA_ssu_MeTfrase_B"/>
</dbReference>
<dbReference type="InterPro" id="IPR054728">
    <property type="entry name" value="RsmB-like_ferredoxin"/>
</dbReference>
<dbReference type="InterPro" id="IPR018314">
    <property type="entry name" value="RsmB/NOL1/NOP2-like_CS"/>
</dbReference>
<dbReference type="InterPro" id="IPR029063">
    <property type="entry name" value="SAM-dependent_MTases_sf"/>
</dbReference>
<dbReference type="NCBIfam" id="NF008149">
    <property type="entry name" value="PRK10901.1"/>
    <property type="match status" value="1"/>
</dbReference>
<dbReference type="NCBIfam" id="TIGR00563">
    <property type="entry name" value="rsmB"/>
    <property type="match status" value="1"/>
</dbReference>
<dbReference type="PANTHER" id="PTHR22807:SF61">
    <property type="entry name" value="NOL1_NOP2_SUN FAMILY PROTEIN _ ANTITERMINATION NUSB DOMAIN-CONTAINING PROTEIN"/>
    <property type="match status" value="1"/>
</dbReference>
<dbReference type="PANTHER" id="PTHR22807">
    <property type="entry name" value="NOP2 YEAST -RELATED NOL1/NOP2/FMU SUN DOMAIN-CONTAINING"/>
    <property type="match status" value="1"/>
</dbReference>
<dbReference type="Pfam" id="PF01189">
    <property type="entry name" value="Methyltr_RsmB-F"/>
    <property type="match status" value="1"/>
</dbReference>
<dbReference type="Pfam" id="PF01029">
    <property type="entry name" value="NusB"/>
    <property type="match status" value="1"/>
</dbReference>
<dbReference type="Pfam" id="PF22458">
    <property type="entry name" value="RsmF-B_ferredox"/>
    <property type="match status" value="1"/>
</dbReference>
<dbReference type="PRINTS" id="PR02008">
    <property type="entry name" value="RCMTFAMILY"/>
</dbReference>
<dbReference type="SUPFAM" id="SSF48013">
    <property type="entry name" value="NusB-like"/>
    <property type="match status" value="1"/>
</dbReference>
<dbReference type="SUPFAM" id="SSF53335">
    <property type="entry name" value="S-adenosyl-L-methionine-dependent methyltransferases"/>
    <property type="match status" value="1"/>
</dbReference>
<dbReference type="PROSITE" id="PS01153">
    <property type="entry name" value="NOL1_NOP2_SUN"/>
    <property type="match status" value="1"/>
</dbReference>
<dbReference type="PROSITE" id="PS51686">
    <property type="entry name" value="SAM_MT_RSMB_NOP"/>
    <property type="match status" value="1"/>
</dbReference>
<sequence length="431" mass="46932">MSDGIAPRVVAARVLALVVDQGRSLKTELAAALPTLEDVRDRALVEAICFAVLRRRPVYEAALTRWLARPLGRGDAQLRGLLMVGFAQLDVLKVPPYAALSATVDACRVLGWPHRVSFVNAVLRRAQRERLPVVSSDAAWPRWLAERIRADWGEQAEAIFDASLKPAPMWLRVNLRYGDRHTYVQRLQAAGLEAVPSGLVPEALALDCSVPVVQLPGFQGGEVSVQDLSAQQVAALLSPAPHARLLDACAAPGGKAAHLLERAPTLCLTALDVDMQRLRRVAETCDRIHVKARLCVADATDLAAWWDGEPFDAVLLDAPCSATGVVRRQPDVLLHRRAEDLLPLLNIQSRLLDACWRTLRPGGVLVYVTCSVLRAENQTQLEAFLARTADACAEDPGDAYGQPAGLGRQRLPGEQGGDGFFYARLIKDISM</sequence>
<name>RSMB_XYLFT</name>
<keyword id="KW-0963">Cytoplasm</keyword>
<keyword id="KW-0489">Methyltransferase</keyword>
<keyword id="KW-1185">Reference proteome</keyword>
<keyword id="KW-0690">Ribosome biogenesis</keyword>
<keyword id="KW-0694">RNA-binding</keyword>
<keyword id="KW-0698">rRNA processing</keyword>
<keyword id="KW-0949">S-adenosyl-L-methionine</keyword>
<keyword id="KW-0808">Transferase</keyword>
<gene>
    <name type="primary">rsmB</name>
    <name type="synonym">rrmB</name>
    <name type="ordered locus">PD_1761</name>
</gene>
<proteinExistence type="inferred from homology"/>
<feature type="chain" id="PRO_0000211813" description="Ribosomal RNA small subunit methyltransferase B">
    <location>
        <begin position="1"/>
        <end position="431"/>
    </location>
</feature>
<feature type="active site" description="Nucleophile" evidence="2">
    <location>
        <position position="370"/>
    </location>
</feature>
<feature type="binding site" evidence="2">
    <location>
        <begin position="249"/>
        <end position="255"/>
    </location>
    <ligand>
        <name>S-adenosyl-L-methionine</name>
        <dbReference type="ChEBI" id="CHEBI:59789"/>
    </ligand>
</feature>
<feature type="binding site" evidence="2">
    <location>
        <position position="272"/>
    </location>
    <ligand>
        <name>S-adenosyl-L-methionine</name>
        <dbReference type="ChEBI" id="CHEBI:59789"/>
    </ligand>
</feature>
<feature type="binding site" evidence="2">
    <location>
        <position position="298"/>
    </location>
    <ligand>
        <name>S-adenosyl-L-methionine</name>
        <dbReference type="ChEBI" id="CHEBI:59789"/>
    </ligand>
</feature>
<feature type="binding site" evidence="2">
    <location>
        <position position="317"/>
    </location>
    <ligand>
        <name>S-adenosyl-L-methionine</name>
        <dbReference type="ChEBI" id="CHEBI:59789"/>
    </ligand>
</feature>
<protein>
    <recommendedName>
        <fullName>Ribosomal RNA small subunit methyltransferase B</fullName>
        <ecNumber>2.1.1.176</ecNumber>
    </recommendedName>
    <alternativeName>
        <fullName>16S rRNA m5C967 methyltransferase</fullName>
    </alternativeName>
    <alternativeName>
        <fullName>rRNA (cytosine-C(5)-)-methyltransferase RsmB</fullName>
    </alternativeName>
</protein>
<organism>
    <name type="scientific">Xylella fastidiosa (strain Temecula1 / ATCC 700964)</name>
    <dbReference type="NCBI Taxonomy" id="183190"/>
    <lineage>
        <taxon>Bacteria</taxon>
        <taxon>Pseudomonadati</taxon>
        <taxon>Pseudomonadota</taxon>
        <taxon>Gammaproteobacteria</taxon>
        <taxon>Lysobacterales</taxon>
        <taxon>Lysobacteraceae</taxon>
        <taxon>Xylella</taxon>
    </lineage>
</organism>